<accession>P31383</accession>
<accession>D6VPK2</accession>
<gene>
    <name type="primary">TPD3</name>
    <name type="ordered locus">YAL016W</name>
    <name type="ORF">FUN32</name>
</gene>
<proteinExistence type="evidence at protein level"/>
<sequence length="635" mass="70907">MSGARSTTAGAVPSAATTSTTSTTSNSKDSDSNESLYPLALLMDELKHDDIANRVEAMKKLDTIALALGPERTRNELIPFLTEVAQDDEDEVFAVLAEQLGKFVPYIGGPQYATILLPVLEILASAEETLVREKAVDSLNNVAQELSQEQLFSDFVPLIEHLATADWFSSKVSACGLFKSVIVRIKDDSLRKNILALYLQLAQDDTPMVKRAVGKNLPILIDLLTQNLGLSTDEDWDYISNIFQKIINDNQDSVKFLAVDCLISILKFFNAKGDESHTQDLLNSAVKLIGDEAWRVRYMAADRFSDLASQFSSNQAYIDELVQPFLNLCEDNEGDVREAVAKQVSGFAKFLNDPSIILNKILPAVQNLSMDESETVRSALASKITNIVLLLNKDQVINNFLPILLNMLRDEFPDVRLNIIASLKVVNDVIGIELLSDSLLPAITELAKDVNWRVRMAIIEYIPILAEQLGMQFFDQQLSDLCLSWLWDTVYSIREAAVNNLKRLTEIFGSDWCRDEIISRLLKFDLQLLENFVSRFTILSALTTLVPVVSLDVVTEQLLPFISHLADDGVPNIRFNVAKSYAVIVKVLIKDEAKYDALIKNTILPSLQTLCQDEDVDVKYFAKKSLAECQELLKN</sequence>
<protein>
    <recommendedName>
        <fullName>Protein phosphatase PP2A regulatory subunit A</fullName>
    </recommendedName>
    <alternativeName>
        <fullName>PR65</fullName>
    </alternativeName>
</protein>
<organism>
    <name type="scientific">Saccharomyces cerevisiae (strain ATCC 204508 / S288c)</name>
    <name type="common">Baker's yeast</name>
    <dbReference type="NCBI Taxonomy" id="559292"/>
    <lineage>
        <taxon>Eukaryota</taxon>
        <taxon>Fungi</taxon>
        <taxon>Dikarya</taxon>
        <taxon>Ascomycota</taxon>
        <taxon>Saccharomycotina</taxon>
        <taxon>Saccharomycetes</taxon>
        <taxon>Saccharomycetales</taxon>
        <taxon>Saccharomycetaceae</taxon>
        <taxon>Saccharomyces</taxon>
    </lineage>
</organism>
<dbReference type="EMBL" id="M98389">
    <property type="protein sequence ID" value="AAA35163.1"/>
    <property type="molecule type" value="Genomic_DNA"/>
</dbReference>
<dbReference type="EMBL" id="L05146">
    <property type="protein sequence ID" value="AAC04941.1"/>
    <property type="molecule type" value="Genomic_DNA"/>
</dbReference>
<dbReference type="EMBL" id="BK006935">
    <property type="protein sequence ID" value="DAA06972.1"/>
    <property type="molecule type" value="Genomic_DNA"/>
</dbReference>
<dbReference type="PIR" id="S36718">
    <property type="entry name" value="S36718"/>
</dbReference>
<dbReference type="RefSeq" id="NP_009386.1">
    <property type="nucleotide sequence ID" value="NM_001178161.1"/>
</dbReference>
<dbReference type="SMR" id="P31383"/>
<dbReference type="BioGRID" id="31750">
    <property type="interactions" value="87"/>
</dbReference>
<dbReference type="ComplexPortal" id="CPX-1856">
    <property type="entry name" value="Serine/threonine-protein phosphatase PP2A variant 1"/>
</dbReference>
<dbReference type="ComplexPortal" id="CPX-1857">
    <property type="entry name" value="Serine/threonine-protein phosphatase PP2A variant 2"/>
</dbReference>
<dbReference type="ComplexPortal" id="CPX-1858">
    <property type="entry name" value="Serine/threonine-protein phosphatase PP2A variant 4"/>
</dbReference>
<dbReference type="ComplexPortal" id="CPX-1859">
    <property type="entry name" value="Serine/threonine-protein phosphatase PP2A variant 3"/>
</dbReference>
<dbReference type="DIP" id="DIP-2010N"/>
<dbReference type="FunCoup" id="P31383">
    <property type="interactions" value="684"/>
</dbReference>
<dbReference type="IntAct" id="P31383">
    <property type="interactions" value="52"/>
</dbReference>
<dbReference type="MINT" id="P31383"/>
<dbReference type="STRING" id="4932.YAL016W"/>
<dbReference type="iPTMnet" id="P31383"/>
<dbReference type="PaxDb" id="4932-YAL016W"/>
<dbReference type="PeptideAtlas" id="P31383"/>
<dbReference type="EnsemblFungi" id="YAL016W_mRNA">
    <property type="protein sequence ID" value="YAL016W"/>
    <property type="gene ID" value="YAL016W"/>
</dbReference>
<dbReference type="GeneID" id="851217"/>
<dbReference type="KEGG" id="sce:YAL016W"/>
<dbReference type="AGR" id="SGD:S000000014"/>
<dbReference type="SGD" id="S000000014">
    <property type="gene designation" value="TPD3"/>
</dbReference>
<dbReference type="VEuPathDB" id="FungiDB:YAL016W"/>
<dbReference type="eggNOG" id="KOG0211">
    <property type="taxonomic scope" value="Eukaryota"/>
</dbReference>
<dbReference type="GeneTree" id="ENSGT00950000183066"/>
<dbReference type="HOGENOM" id="CLU_015533_2_1_1"/>
<dbReference type="InParanoid" id="P31383"/>
<dbReference type="OMA" id="NRVEAMQ"/>
<dbReference type="OrthoDB" id="340346at2759"/>
<dbReference type="BioCyc" id="YEAST:G3O-28828-MONOMER"/>
<dbReference type="Reactome" id="R-SCE-198753">
    <property type="pathway name" value="ERK/MAPK targets"/>
</dbReference>
<dbReference type="Reactome" id="R-SCE-202670">
    <property type="pathway name" value="ERKs are inactivated"/>
</dbReference>
<dbReference type="Reactome" id="R-SCE-389513">
    <property type="pathway name" value="Co-inhibition by CTLA4"/>
</dbReference>
<dbReference type="Reactome" id="R-SCE-6811558">
    <property type="pathway name" value="PI5P, PP2A and IER3 Regulate PI3K/AKT Signaling"/>
</dbReference>
<dbReference type="Reactome" id="R-SCE-69273">
    <property type="pathway name" value="Cyclin A/B1/B2 associated events during G2/M transition"/>
</dbReference>
<dbReference type="Reactome" id="R-SCE-975957">
    <property type="pathway name" value="Nonsense Mediated Decay (NMD) enhanced by the Exon Junction Complex (EJC)"/>
</dbReference>
<dbReference type="BioGRID-ORCS" id="851217">
    <property type="hits" value="9 hits in 10 CRISPR screens"/>
</dbReference>
<dbReference type="CD-CODE" id="876000F7">
    <property type="entry name" value="Centrosome"/>
</dbReference>
<dbReference type="PRO" id="PR:P31383"/>
<dbReference type="Proteomes" id="UP000002311">
    <property type="component" value="Chromosome I"/>
</dbReference>
<dbReference type="RNAct" id="P31383">
    <property type="molecule type" value="protein"/>
</dbReference>
<dbReference type="GO" id="GO:0005935">
    <property type="term" value="C:cellular bud neck"/>
    <property type="evidence" value="ECO:0000314"/>
    <property type="project" value="SGD"/>
</dbReference>
<dbReference type="GO" id="GO:0005934">
    <property type="term" value="C:cellular bud tip"/>
    <property type="evidence" value="ECO:0000314"/>
    <property type="project" value="SGD"/>
</dbReference>
<dbReference type="GO" id="GO:0005737">
    <property type="term" value="C:cytoplasm"/>
    <property type="evidence" value="ECO:0000314"/>
    <property type="project" value="SGD"/>
</dbReference>
<dbReference type="GO" id="GO:0005829">
    <property type="term" value="C:cytosol"/>
    <property type="evidence" value="ECO:0000318"/>
    <property type="project" value="GO_Central"/>
</dbReference>
<dbReference type="GO" id="GO:0043332">
    <property type="term" value="C:mating projection tip"/>
    <property type="evidence" value="ECO:0000314"/>
    <property type="project" value="SGD"/>
</dbReference>
<dbReference type="GO" id="GO:0005634">
    <property type="term" value="C:nucleus"/>
    <property type="evidence" value="ECO:0000314"/>
    <property type="project" value="SGD"/>
</dbReference>
<dbReference type="GO" id="GO:0000159">
    <property type="term" value="C:protein phosphatase type 2A complex"/>
    <property type="evidence" value="ECO:0000314"/>
    <property type="project" value="SGD"/>
</dbReference>
<dbReference type="GO" id="GO:0005816">
    <property type="term" value="C:spindle pole body"/>
    <property type="evidence" value="ECO:0000314"/>
    <property type="project" value="SGD"/>
</dbReference>
<dbReference type="GO" id="GO:0019888">
    <property type="term" value="F:protein phosphatase regulator activity"/>
    <property type="evidence" value="ECO:0000318"/>
    <property type="project" value="GO_Central"/>
</dbReference>
<dbReference type="GO" id="GO:0051754">
    <property type="term" value="P:meiotic sister chromatid cohesion, centromeric"/>
    <property type="evidence" value="ECO:0000318"/>
    <property type="project" value="GO_Central"/>
</dbReference>
<dbReference type="GO" id="GO:0007094">
    <property type="term" value="P:mitotic spindle assembly checkpoint signaling"/>
    <property type="evidence" value="ECO:0000315"/>
    <property type="project" value="SGD"/>
</dbReference>
<dbReference type="GO" id="GO:0006417">
    <property type="term" value="P:regulation of translation"/>
    <property type="evidence" value="ECO:0000315"/>
    <property type="project" value="SGD"/>
</dbReference>
<dbReference type="GO" id="GO:0051225">
    <property type="term" value="P:spindle assembly"/>
    <property type="evidence" value="ECO:0000318"/>
    <property type="project" value="GO_Central"/>
</dbReference>
<dbReference type="FunFam" id="1.25.10.10:FF:000062">
    <property type="entry name" value="Serine/threonine-protein phosphatase 2A regulatory subunit A alpha isoform"/>
    <property type="match status" value="1"/>
</dbReference>
<dbReference type="Gene3D" id="1.25.10.10">
    <property type="entry name" value="Leucine-rich Repeat Variant"/>
    <property type="match status" value="1"/>
</dbReference>
<dbReference type="InterPro" id="IPR011989">
    <property type="entry name" value="ARM-like"/>
</dbReference>
<dbReference type="InterPro" id="IPR016024">
    <property type="entry name" value="ARM-type_fold"/>
</dbReference>
<dbReference type="InterPro" id="IPR000357">
    <property type="entry name" value="HEAT"/>
</dbReference>
<dbReference type="InterPro" id="IPR021133">
    <property type="entry name" value="HEAT_type_2"/>
</dbReference>
<dbReference type="InterPro" id="IPR054573">
    <property type="entry name" value="PP2A/SF3B1-like_HEAT"/>
</dbReference>
<dbReference type="InterPro" id="IPR051023">
    <property type="entry name" value="PP2A_Regulatory_Subunit_A"/>
</dbReference>
<dbReference type="PANTHER" id="PTHR10648:SF4">
    <property type="entry name" value="PROTEIN PHOSPHATASE 2 (FORMERLY 2A), REGULATORY SUBUNIT A, BETA ISOFORM-RELATED"/>
    <property type="match status" value="1"/>
</dbReference>
<dbReference type="PANTHER" id="PTHR10648">
    <property type="entry name" value="SERINE/THREONINE-PROTEIN PHOSPHATASE PP2A 65 KDA REGULATORY SUBUNIT"/>
    <property type="match status" value="1"/>
</dbReference>
<dbReference type="Pfam" id="PF02985">
    <property type="entry name" value="HEAT"/>
    <property type="match status" value="1"/>
</dbReference>
<dbReference type="Pfam" id="PF22646">
    <property type="entry name" value="PPP2R1A-like_HEAT"/>
    <property type="match status" value="1"/>
</dbReference>
<dbReference type="SUPFAM" id="SSF48371">
    <property type="entry name" value="ARM repeat"/>
    <property type="match status" value="1"/>
</dbReference>
<dbReference type="PROSITE" id="PS50077">
    <property type="entry name" value="HEAT_REPEAT"/>
    <property type="match status" value="9"/>
</dbReference>
<feature type="chain" id="PRO_0000071414" description="Protein phosphatase PP2A regulatory subunit A">
    <location>
        <begin position="1"/>
        <end position="635"/>
    </location>
</feature>
<feature type="repeat" description="HEAT 1">
    <location>
        <begin position="34"/>
        <end position="72"/>
    </location>
</feature>
<feature type="repeat" description="HEAT 2">
    <location>
        <begin position="73"/>
        <end position="111"/>
    </location>
</feature>
<feature type="repeat" description="HEAT 3">
    <location>
        <begin position="112"/>
        <end position="150"/>
    </location>
</feature>
<feature type="repeat" description="HEAT 4">
    <location>
        <begin position="151"/>
        <end position="189"/>
    </location>
</feature>
<feature type="repeat" description="HEAT 5">
    <location>
        <begin position="190"/>
        <end position="228"/>
    </location>
</feature>
<feature type="repeat" description="HEAT 6">
    <location>
        <begin position="229"/>
        <end position="273"/>
    </location>
</feature>
<feature type="repeat" description="HEAT 7">
    <location>
        <begin position="274"/>
        <end position="316"/>
    </location>
</feature>
<feature type="repeat" description="HEAT 8">
    <location>
        <begin position="317"/>
        <end position="356"/>
    </location>
</feature>
<feature type="repeat" description="HEAT 9">
    <location>
        <begin position="357"/>
        <end position="395"/>
    </location>
</feature>
<feature type="repeat" description="HEAT 10">
    <location>
        <begin position="396"/>
        <end position="434"/>
    </location>
</feature>
<feature type="repeat" description="HEAT 11">
    <location>
        <begin position="435"/>
        <end position="473"/>
    </location>
</feature>
<feature type="repeat" description="HEAT 12">
    <location>
        <begin position="474"/>
        <end position="512"/>
    </location>
</feature>
<feature type="repeat" description="HEAT 13">
    <location>
        <begin position="513"/>
        <end position="553"/>
    </location>
</feature>
<feature type="repeat" description="HEAT 14">
    <location>
        <begin position="554"/>
        <end position="598"/>
    </location>
</feature>
<feature type="repeat" description="HEAT 15">
    <location>
        <begin position="599"/>
        <end position="632"/>
    </location>
</feature>
<feature type="region of interest" description="Disordered" evidence="1">
    <location>
        <begin position="1"/>
        <end position="33"/>
    </location>
</feature>
<feature type="compositionally biased region" description="Low complexity" evidence="1">
    <location>
        <begin position="1"/>
        <end position="27"/>
    </location>
</feature>
<feature type="sequence conflict" description="In Ref. 1; AAA35163." evidence="3" ref="1">
    <original>V</original>
    <variation>L</variation>
    <location>
        <position position="336"/>
    </location>
</feature>
<feature type="sequence conflict" description="In Ref. 1; AAA35163." evidence="3" ref="1">
    <original>I</original>
    <variation>T</variation>
    <location>
        <position position="356"/>
    </location>
</feature>
<feature type="sequence conflict" description="In Ref. 1; AAA35163." evidence="3" ref="1">
    <original>Q</original>
    <variation>E</variation>
    <location>
        <position position="366"/>
    </location>
</feature>
<feature type="sequence conflict" description="In Ref. 1; AAA35163." evidence="3" ref="1">
    <original>C</original>
    <variation>F</variation>
    <location>
        <position position="611"/>
    </location>
</feature>
<reference key="1">
    <citation type="journal article" date="1992" name="Mol. Cell. Biol.">
        <title>Inactivation of the protein phosphatase 2A regulatory subunit A results in morphological and transcriptional defects in Saccharomyces cerevisiae.</title>
        <authorList>
            <person name="van Zyl W."/>
            <person name="Huang W."/>
            <person name="Sneddon A.A."/>
            <person name="Stark M."/>
            <person name="Camier S."/>
            <person name="Werner M."/>
            <person name="Marck C."/>
            <person name="Sentenac A."/>
            <person name="Broach J.R."/>
        </authorList>
    </citation>
    <scope>NUCLEOTIDE SEQUENCE [GENOMIC DNA]</scope>
    <source>
        <strain>ATCC 204508 / S288c</strain>
    </source>
</reference>
<reference key="2">
    <citation type="journal article" date="1993" name="Genome">
        <title>Sequencing of chromosome I from Saccharomyces cerevisiae: analysis of a 32 kb region between the LTE1 and SPO7 genes.</title>
        <authorList>
            <person name="Ouellette B.F.F."/>
            <person name="Clark M.W."/>
            <person name="Keng T."/>
            <person name="Storms R.K."/>
            <person name="Zhong W.-W."/>
            <person name="Zeng B."/>
            <person name="Fortin N."/>
            <person name="Delaney S."/>
            <person name="Barton A.B."/>
            <person name="Kaback D.B."/>
            <person name="Bussey H."/>
        </authorList>
    </citation>
    <scope>NUCLEOTIDE SEQUENCE [GENOMIC DNA]</scope>
    <source>
        <strain>ATCC 204511 / S288c / AB972</strain>
    </source>
</reference>
<reference key="3">
    <citation type="journal article" date="1994" name="J. Bacteriol.">
        <title>Molecular cloning of chromosome I DNA from Saccharomyces cerevisiae: analysis of the genes in the FUN38-MAK16-SPO7 region.</title>
        <authorList>
            <person name="Barton A.B."/>
            <person name="Kaback D.B."/>
        </authorList>
    </citation>
    <scope>NUCLEOTIDE SEQUENCE [GENOMIC DNA]</scope>
    <source>
        <strain>ATCC 204511 / S288c / AB972</strain>
    </source>
</reference>
<reference key="4">
    <citation type="journal article" date="1995" name="Proc. Natl. Acad. Sci. U.S.A.">
        <title>The nucleotide sequence of chromosome I from Saccharomyces cerevisiae.</title>
        <authorList>
            <person name="Bussey H."/>
            <person name="Kaback D.B."/>
            <person name="Zhong W.-W."/>
            <person name="Vo D.H."/>
            <person name="Clark M.W."/>
            <person name="Fortin N."/>
            <person name="Hall J."/>
            <person name="Ouellette B.F.F."/>
            <person name="Keng T."/>
            <person name="Barton A.B."/>
            <person name="Su Y."/>
            <person name="Davies C.J."/>
            <person name="Storms R.K."/>
        </authorList>
    </citation>
    <scope>NUCLEOTIDE SEQUENCE [LARGE SCALE GENOMIC DNA]</scope>
    <source>
        <strain>ATCC 204508 / S288c</strain>
    </source>
</reference>
<reference key="5">
    <citation type="journal article" date="2014" name="G3 (Bethesda)">
        <title>The reference genome sequence of Saccharomyces cerevisiae: Then and now.</title>
        <authorList>
            <person name="Engel S.R."/>
            <person name="Dietrich F.S."/>
            <person name="Fisk D.G."/>
            <person name="Binkley G."/>
            <person name="Balakrishnan R."/>
            <person name="Costanzo M.C."/>
            <person name="Dwight S.S."/>
            <person name="Hitz B.C."/>
            <person name="Karra K."/>
            <person name="Nash R.S."/>
            <person name="Weng S."/>
            <person name="Wong E.D."/>
            <person name="Lloyd P."/>
            <person name="Skrzypek M.S."/>
            <person name="Miyasato S.R."/>
            <person name="Simison M."/>
            <person name="Cherry J.M."/>
        </authorList>
    </citation>
    <scope>GENOME REANNOTATION</scope>
    <source>
        <strain>ATCC 204508 / S288c</strain>
    </source>
</reference>
<reference key="6">
    <citation type="journal article" date="2003" name="Nature">
        <title>Global analysis of protein expression in yeast.</title>
        <authorList>
            <person name="Ghaemmaghami S."/>
            <person name="Huh W.-K."/>
            <person name="Bower K."/>
            <person name="Howson R.W."/>
            <person name="Belle A."/>
            <person name="Dephoure N."/>
            <person name="O'Shea E.K."/>
            <person name="Weissman J.S."/>
        </authorList>
    </citation>
    <scope>LEVEL OF PROTEIN EXPRESSION [LARGE SCALE ANALYSIS]</scope>
</reference>
<reference key="7">
    <citation type="journal article" date="2009" name="Science">
        <title>Global analysis of Cdk1 substrate phosphorylation sites provides insights into evolution.</title>
        <authorList>
            <person name="Holt L.J."/>
            <person name="Tuch B.B."/>
            <person name="Villen J."/>
            <person name="Johnson A.D."/>
            <person name="Gygi S.P."/>
            <person name="Morgan D.O."/>
        </authorList>
    </citation>
    <scope>IDENTIFICATION BY MASS SPECTROMETRY [LARGE SCALE ANALYSIS]</scope>
</reference>
<keyword id="KW-1185">Reference proteome</keyword>
<keyword id="KW-0677">Repeat</keyword>
<comment type="function">
    <text>Phosphatase 2A affects a variety of biological processes in the cell such as transcription, cell cycle progression and cellular morphogenesis, and provides an initial identification of critical substrates for this phosphatase. The regulatory subunit may direct the catalytic subunit to distinct, albeit overlapping, subsets of substrates.</text>
</comment>
<comment type="subunit">
    <text>PP2A exists in several trimeric forms, all of which consist of a core composed of a catalytic subunit associated with a 65 kDa regulatory subunit (PR65) (subunit A). The core complex associates with a third, variable subunit (subunit B), which confers distinct properties to the holoenzyme.</text>
</comment>
<comment type="interaction">
    <interactant intactId="EBI-1936">
        <id>P31383</id>
    </interactant>
    <interactant intactId="EBI-28900">
        <id>P53917</id>
        <label>FAR11</label>
    </interactant>
    <organismsDiffer>false</organismsDiffer>
    <experiments>3</experiments>
</comment>
<comment type="domain">
    <text>Each HEAT repeat appears to consist of two alpha helices joined by a hydrophilic region, the intrarepeat loop. The repeat units may be arranged laterally to form a rod-like structure.</text>
</comment>
<comment type="miscellaneous">
    <text evidence="2">Present with 16900 molecules/cell in log phase SD medium.</text>
</comment>
<comment type="similarity">
    <text evidence="3">Belongs to the phosphatase 2A regulatory subunit A family.</text>
</comment>
<name>2AAA_YEAST</name>
<evidence type="ECO:0000256" key="1">
    <source>
        <dbReference type="SAM" id="MobiDB-lite"/>
    </source>
</evidence>
<evidence type="ECO:0000269" key="2">
    <source>
    </source>
</evidence>
<evidence type="ECO:0000305" key="3"/>